<protein>
    <recommendedName>
        <fullName evidence="1">Aspartate--tRNA ligase</fullName>
        <ecNumber evidence="1">6.1.1.12</ecNumber>
    </recommendedName>
    <alternativeName>
        <fullName evidence="1">Aspartyl-tRNA synthetase</fullName>
        <shortName evidence="1">AspRS</shortName>
    </alternativeName>
</protein>
<sequence>MSKRTTYCGLVTEAFLGQEITLKGWVNNRRDLGGLIFVDLRDREGIVQVVFNPAFSEEALKIAETVRSEYVVEVQGTVTKRDPETVNPKIKTGQVEVQVTNIKVINKSETPPFSINEENVNVDENIRLKYRYLDLRRQELAQTFKMRHQITRSIRQYLDDEGFFDIETPVLTKSTPEGARDYLVPSRVHDGEFYALPQSPQLFKQLLMISGFDKYYQIVKCFRDEDLRADRQPEFTQVDIEMSFVDQEDVMQMGEEMLKKVVKEVKGVEINGAFPRMTYKEAMRRYGSDKPDTRFEMELIDVSQLGRDMDFKVFKDTVENDGEIKAIVAKGAAEQYTRKDMDALTEFVNIYGAKGLAWVKVVEDGLTGPIGRFFETENVETLLTLTGAEAGDLVMFVADKPNVVAQSLGALRVKLAKELGLIDETKLNFLWVTDWPLLEYDEDAKRYVAAHHPFTSPKEADIAKLGTAPEEAEANAYDIVLNGYELGGGSIRIHDGELQEKMFEVLGFTKEQAQEQFGFLLDAFKYGAPPHGGIALGLDRLVMLLTNRTNLRDTIAFPKTASATCLLTNAPGEVSDKQLEELSLRIRH</sequence>
<comment type="function">
    <text evidence="1">Catalyzes the attachment of L-aspartate to tRNA(Asp) in a two-step reaction: L-aspartate is first activated by ATP to form Asp-AMP and then transferred to the acceptor end of tRNA(Asp).</text>
</comment>
<comment type="catalytic activity">
    <reaction evidence="1">
        <text>tRNA(Asp) + L-aspartate + ATP = L-aspartyl-tRNA(Asp) + AMP + diphosphate</text>
        <dbReference type="Rhea" id="RHEA:19649"/>
        <dbReference type="Rhea" id="RHEA-COMP:9660"/>
        <dbReference type="Rhea" id="RHEA-COMP:9678"/>
        <dbReference type="ChEBI" id="CHEBI:29991"/>
        <dbReference type="ChEBI" id="CHEBI:30616"/>
        <dbReference type="ChEBI" id="CHEBI:33019"/>
        <dbReference type="ChEBI" id="CHEBI:78442"/>
        <dbReference type="ChEBI" id="CHEBI:78516"/>
        <dbReference type="ChEBI" id="CHEBI:456215"/>
        <dbReference type="EC" id="6.1.1.12"/>
    </reaction>
</comment>
<comment type="subunit">
    <text evidence="1">Homodimer.</text>
</comment>
<comment type="subcellular location">
    <subcellularLocation>
        <location evidence="1">Cytoplasm</location>
    </subcellularLocation>
</comment>
<comment type="similarity">
    <text evidence="1">Belongs to the class-II aminoacyl-tRNA synthetase family. Type 1 subfamily.</text>
</comment>
<keyword id="KW-0030">Aminoacyl-tRNA synthetase</keyword>
<keyword id="KW-0067">ATP-binding</keyword>
<keyword id="KW-0963">Cytoplasm</keyword>
<keyword id="KW-0436">Ligase</keyword>
<keyword id="KW-0547">Nucleotide-binding</keyword>
<keyword id="KW-0648">Protein biosynthesis</keyword>
<proteinExistence type="inferred from homology"/>
<accession>A6QHH2</accession>
<organism>
    <name type="scientific">Staphylococcus aureus (strain Newman)</name>
    <dbReference type="NCBI Taxonomy" id="426430"/>
    <lineage>
        <taxon>Bacteria</taxon>
        <taxon>Bacillati</taxon>
        <taxon>Bacillota</taxon>
        <taxon>Bacilli</taxon>
        <taxon>Bacillales</taxon>
        <taxon>Staphylococcaceae</taxon>
        <taxon>Staphylococcus</taxon>
    </lineage>
</organism>
<name>SYD_STAAE</name>
<dbReference type="EC" id="6.1.1.12" evidence="1"/>
<dbReference type="EMBL" id="AP009351">
    <property type="protein sequence ID" value="BAF67804.1"/>
    <property type="molecule type" value="Genomic_DNA"/>
</dbReference>
<dbReference type="RefSeq" id="WP_000044799.1">
    <property type="nucleotide sequence ID" value="NZ_JBBIAE010000001.1"/>
</dbReference>
<dbReference type="SMR" id="A6QHH2"/>
<dbReference type="KEGG" id="sae:NWMN_1532"/>
<dbReference type="HOGENOM" id="CLU_014330_3_2_9"/>
<dbReference type="Proteomes" id="UP000006386">
    <property type="component" value="Chromosome"/>
</dbReference>
<dbReference type="GO" id="GO:0005737">
    <property type="term" value="C:cytoplasm"/>
    <property type="evidence" value="ECO:0007669"/>
    <property type="project" value="UniProtKB-SubCell"/>
</dbReference>
<dbReference type="GO" id="GO:0004815">
    <property type="term" value="F:aspartate-tRNA ligase activity"/>
    <property type="evidence" value="ECO:0007669"/>
    <property type="project" value="UniProtKB-UniRule"/>
</dbReference>
<dbReference type="GO" id="GO:0005524">
    <property type="term" value="F:ATP binding"/>
    <property type="evidence" value="ECO:0007669"/>
    <property type="project" value="UniProtKB-UniRule"/>
</dbReference>
<dbReference type="GO" id="GO:0140096">
    <property type="term" value="F:catalytic activity, acting on a protein"/>
    <property type="evidence" value="ECO:0007669"/>
    <property type="project" value="UniProtKB-ARBA"/>
</dbReference>
<dbReference type="GO" id="GO:0003676">
    <property type="term" value="F:nucleic acid binding"/>
    <property type="evidence" value="ECO:0007669"/>
    <property type="project" value="InterPro"/>
</dbReference>
<dbReference type="GO" id="GO:0016740">
    <property type="term" value="F:transferase activity"/>
    <property type="evidence" value="ECO:0007669"/>
    <property type="project" value="UniProtKB-ARBA"/>
</dbReference>
<dbReference type="GO" id="GO:0006422">
    <property type="term" value="P:aspartyl-tRNA aminoacylation"/>
    <property type="evidence" value="ECO:0007669"/>
    <property type="project" value="UniProtKB-UniRule"/>
</dbReference>
<dbReference type="CDD" id="cd00777">
    <property type="entry name" value="AspRS_core"/>
    <property type="match status" value="1"/>
</dbReference>
<dbReference type="CDD" id="cd04317">
    <property type="entry name" value="EcAspRS_like_N"/>
    <property type="match status" value="1"/>
</dbReference>
<dbReference type="Gene3D" id="3.30.930.10">
    <property type="entry name" value="Bira Bifunctional Protein, Domain 2"/>
    <property type="match status" value="1"/>
</dbReference>
<dbReference type="Gene3D" id="3.30.1360.30">
    <property type="entry name" value="GAD-like domain"/>
    <property type="match status" value="1"/>
</dbReference>
<dbReference type="Gene3D" id="2.40.50.140">
    <property type="entry name" value="Nucleic acid-binding proteins"/>
    <property type="match status" value="1"/>
</dbReference>
<dbReference type="HAMAP" id="MF_00044">
    <property type="entry name" value="Asp_tRNA_synth_type1"/>
    <property type="match status" value="1"/>
</dbReference>
<dbReference type="InterPro" id="IPR004364">
    <property type="entry name" value="Aa-tRNA-synt_II"/>
</dbReference>
<dbReference type="InterPro" id="IPR006195">
    <property type="entry name" value="aa-tRNA-synth_II"/>
</dbReference>
<dbReference type="InterPro" id="IPR045864">
    <property type="entry name" value="aa-tRNA-synth_II/BPL/LPL"/>
</dbReference>
<dbReference type="InterPro" id="IPR004524">
    <property type="entry name" value="Asp-tRNA-ligase_1"/>
</dbReference>
<dbReference type="InterPro" id="IPR047089">
    <property type="entry name" value="Asp-tRNA-ligase_1_N"/>
</dbReference>
<dbReference type="InterPro" id="IPR002312">
    <property type="entry name" value="Asp/Asn-tRNA-synth_IIb"/>
</dbReference>
<dbReference type="InterPro" id="IPR047090">
    <property type="entry name" value="AspRS_core"/>
</dbReference>
<dbReference type="InterPro" id="IPR004115">
    <property type="entry name" value="GAD-like_sf"/>
</dbReference>
<dbReference type="InterPro" id="IPR029351">
    <property type="entry name" value="GAD_dom"/>
</dbReference>
<dbReference type="InterPro" id="IPR012340">
    <property type="entry name" value="NA-bd_OB-fold"/>
</dbReference>
<dbReference type="InterPro" id="IPR004365">
    <property type="entry name" value="NA-bd_OB_tRNA"/>
</dbReference>
<dbReference type="NCBIfam" id="TIGR00459">
    <property type="entry name" value="aspS_bact"/>
    <property type="match status" value="1"/>
</dbReference>
<dbReference type="NCBIfam" id="NF001750">
    <property type="entry name" value="PRK00476.1"/>
    <property type="match status" value="1"/>
</dbReference>
<dbReference type="PANTHER" id="PTHR22594:SF5">
    <property type="entry name" value="ASPARTATE--TRNA LIGASE, MITOCHONDRIAL"/>
    <property type="match status" value="1"/>
</dbReference>
<dbReference type="PANTHER" id="PTHR22594">
    <property type="entry name" value="ASPARTYL/LYSYL-TRNA SYNTHETASE"/>
    <property type="match status" value="1"/>
</dbReference>
<dbReference type="Pfam" id="PF02938">
    <property type="entry name" value="GAD"/>
    <property type="match status" value="1"/>
</dbReference>
<dbReference type="Pfam" id="PF00152">
    <property type="entry name" value="tRNA-synt_2"/>
    <property type="match status" value="1"/>
</dbReference>
<dbReference type="Pfam" id="PF01336">
    <property type="entry name" value="tRNA_anti-codon"/>
    <property type="match status" value="1"/>
</dbReference>
<dbReference type="PRINTS" id="PR01042">
    <property type="entry name" value="TRNASYNTHASP"/>
</dbReference>
<dbReference type="SUPFAM" id="SSF55681">
    <property type="entry name" value="Class II aaRS and biotin synthetases"/>
    <property type="match status" value="1"/>
</dbReference>
<dbReference type="SUPFAM" id="SSF55261">
    <property type="entry name" value="GAD domain-like"/>
    <property type="match status" value="1"/>
</dbReference>
<dbReference type="SUPFAM" id="SSF50249">
    <property type="entry name" value="Nucleic acid-binding proteins"/>
    <property type="match status" value="1"/>
</dbReference>
<dbReference type="PROSITE" id="PS50862">
    <property type="entry name" value="AA_TRNA_LIGASE_II"/>
    <property type="match status" value="1"/>
</dbReference>
<evidence type="ECO:0000255" key="1">
    <source>
        <dbReference type="HAMAP-Rule" id="MF_00044"/>
    </source>
</evidence>
<feature type="chain" id="PRO_1000071087" description="Aspartate--tRNA ligase">
    <location>
        <begin position="1"/>
        <end position="588"/>
    </location>
</feature>
<feature type="region of interest" description="Aspartate" evidence="1">
    <location>
        <begin position="201"/>
        <end position="204"/>
    </location>
</feature>
<feature type="binding site" evidence="1">
    <location>
        <position position="177"/>
    </location>
    <ligand>
        <name>L-aspartate</name>
        <dbReference type="ChEBI" id="CHEBI:29991"/>
    </ligand>
</feature>
<feature type="binding site" evidence="1">
    <location>
        <begin position="223"/>
        <end position="225"/>
    </location>
    <ligand>
        <name>ATP</name>
        <dbReference type="ChEBI" id="CHEBI:30616"/>
    </ligand>
</feature>
<feature type="binding site" evidence="1">
    <location>
        <position position="223"/>
    </location>
    <ligand>
        <name>L-aspartate</name>
        <dbReference type="ChEBI" id="CHEBI:29991"/>
    </ligand>
</feature>
<feature type="binding site" evidence="1">
    <location>
        <position position="232"/>
    </location>
    <ligand>
        <name>ATP</name>
        <dbReference type="ChEBI" id="CHEBI:30616"/>
    </ligand>
</feature>
<feature type="binding site" evidence="1">
    <location>
        <position position="451"/>
    </location>
    <ligand>
        <name>L-aspartate</name>
        <dbReference type="ChEBI" id="CHEBI:29991"/>
    </ligand>
</feature>
<feature type="binding site" evidence="1">
    <location>
        <position position="485"/>
    </location>
    <ligand>
        <name>ATP</name>
        <dbReference type="ChEBI" id="CHEBI:30616"/>
    </ligand>
</feature>
<feature type="binding site" evidence="1">
    <location>
        <position position="492"/>
    </location>
    <ligand>
        <name>L-aspartate</name>
        <dbReference type="ChEBI" id="CHEBI:29991"/>
    </ligand>
</feature>
<feature type="binding site" evidence="1">
    <location>
        <begin position="537"/>
        <end position="540"/>
    </location>
    <ligand>
        <name>ATP</name>
        <dbReference type="ChEBI" id="CHEBI:30616"/>
    </ligand>
</feature>
<gene>
    <name evidence="1" type="primary">aspS</name>
    <name type="ordered locus">NWMN_1532</name>
</gene>
<reference key="1">
    <citation type="journal article" date="2008" name="J. Bacteriol.">
        <title>Genome sequence of Staphylococcus aureus strain Newman and comparative analysis of staphylococcal genomes: polymorphism and evolution of two major pathogenicity islands.</title>
        <authorList>
            <person name="Baba T."/>
            <person name="Bae T."/>
            <person name="Schneewind O."/>
            <person name="Takeuchi F."/>
            <person name="Hiramatsu K."/>
        </authorList>
    </citation>
    <scope>NUCLEOTIDE SEQUENCE [LARGE SCALE GENOMIC DNA]</scope>
    <source>
        <strain>Newman</strain>
    </source>
</reference>